<protein>
    <recommendedName>
        <fullName evidence="1">Ribonuclease P protein component</fullName>
        <shortName evidence="1">RNase P protein</shortName>
        <shortName evidence="1">RNaseP protein</shortName>
        <ecNumber evidence="1">3.1.26.5</ecNumber>
    </recommendedName>
    <alternativeName>
        <fullName evidence="1">Protein C5</fullName>
    </alternativeName>
</protein>
<accession>B7N2E9</accession>
<gene>
    <name evidence="1" type="primary">rnpA</name>
    <name type="ordered locus">ECED1_4395</name>
</gene>
<feature type="chain" id="PRO_1000194642" description="Ribonuclease P protein component">
    <location>
        <begin position="1"/>
        <end position="119"/>
    </location>
</feature>
<sequence>MVKLAFPRELRLLTPSQFTFVFQQPQRAGTPQITILGRLNSLGHPRIGLTVAKKNVRRAHERNRIKRLTRESFRLRQHELPAMDFVVVAKKGVADLDNRALSEALEKLWRRHCRLARGS</sequence>
<comment type="function">
    <text evidence="1">RNaseP catalyzes the removal of the 5'-leader sequence from pre-tRNA to produce the mature 5'-terminus. It can also cleave other RNA substrates such as 4.5S RNA. The protein component plays an auxiliary but essential role in vivo by binding to the 5'-leader sequence and broadening the substrate specificity of the ribozyme.</text>
</comment>
<comment type="catalytic activity">
    <reaction evidence="1">
        <text>Endonucleolytic cleavage of RNA, removing 5'-extranucleotides from tRNA precursor.</text>
        <dbReference type="EC" id="3.1.26.5"/>
    </reaction>
</comment>
<comment type="subunit">
    <text evidence="1">Consists of a catalytic RNA component (M1 or rnpB) and a protein subunit.</text>
</comment>
<comment type="similarity">
    <text evidence="1">Belongs to the RnpA family.</text>
</comment>
<proteinExistence type="inferred from homology"/>
<evidence type="ECO:0000255" key="1">
    <source>
        <dbReference type="HAMAP-Rule" id="MF_00227"/>
    </source>
</evidence>
<keyword id="KW-0255">Endonuclease</keyword>
<keyword id="KW-0378">Hydrolase</keyword>
<keyword id="KW-0540">Nuclease</keyword>
<keyword id="KW-0694">RNA-binding</keyword>
<keyword id="KW-0819">tRNA processing</keyword>
<reference key="1">
    <citation type="journal article" date="2009" name="PLoS Genet.">
        <title>Organised genome dynamics in the Escherichia coli species results in highly diverse adaptive paths.</title>
        <authorList>
            <person name="Touchon M."/>
            <person name="Hoede C."/>
            <person name="Tenaillon O."/>
            <person name="Barbe V."/>
            <person name="Baeriswyl S."/>
            <person name="Bidet P."/>
            <person name="Bingen E."/>
            <person name="Bonacorsi S."/>
            <person name="Bouchier C."/>
            <person name="Bouvet O."/>
            <person name="Calteau A."/>
            <person name="Chiapello H."/>
            <person name="Clermont O."/>
            <person name="Cruveiller S."/>
            <person name="Danchin A."/>
            <person name="Diard M."/>
            <person name="Dossat C."/>
            <person name="Karoui M.E."/>
            <person name="Frapy E."/>
            <person name="Garry L."/>
            <person name="Ghigo J.M."/>
            <person name="Gilles A.M."/>
            <person name="Johnson J."/>
            <person name="Le Bouguenec C."/>
            <person name="Lescat M."/>
            <person name="Mangenot S."/>
            <person name="Martinez-Jehanne V."/>
            <person name="Matic I."/>
            <person name="Nassif X."/>
            <person name="Oztas S."/>
            <person name="Petit M.A."/>
            <person name="Pichon C."/>
            <person name="Rouy Z."/>
            <person name="Ruf C.S."/>
            <person name="Schneider D."/>
            <person name="Tourret J."/>
            <person name="Vacherie B."/>
            <person name="Vallenet D."/>
            <person name="Medigue C."/>
            <person name="Rocha E.P.C."/>
            <person name="Denamur E."/>
        </authorList>
    </citation>
    <scope>NUCLEOTIDE SEQUENCE [LARGE SCALE GENOMIC DNA]</scope>
    <source>
        <strain>ED1a</strain>
    </source>
</reference>
<dbReference type="EC" id="3.1.26.5" evidence="1"/>
<dbReference type="EMBL" id="CU928162">
    <property type="protein sequence ID" value="CAR10520.2"/>
    <property type="molecule type" value="Genomic_DNA"/>
</dbReference>
<dbReference type="RefSeq" id="WP_000239730.1">
    <property type="nucleotide sequence ID" value="NC_011745.1"/>
</dbReference>
<dbReference type="SMR" id="B7N2E9"/>
<dbReference type="GeneID" id="93778446"/>
<dbReference type="KEGG" id="ecq:ECED1_4395"/>
<dbReference type="HOGENOM" id="CLU_117179_11_0_6"/>
<dbReference type="Proteomes" id="UP000000748">
    <property type="component" value="Chromosome"/>
</dbReference>
<dbReference type="GO" id="GO:0030677">
    <property type="term" value="C:ribonuclease P complex"/>
    <property type="evidence" value="ECO:0007669"/>
    <property type="project" value="TreeGrafter"/>
</dbReference>
<dbReference type="GO" id="GO:0042781">
    <property type="term" value="F:3'-tRNA processing endoribonuclease activity"/>
    <property type="evidence" value="ECO:0007669"/>
    <property type="project" value="TreeGrafter"/>
</dbReference>
<dbReference type="GO" id="GO:0004526">
    <property type="term" value="F:ribonuclease P activity"/>
    <property type="evidence" value="ECO:0007669"/>
    <property type="project" value="UniProtKB-UniRule"/>
</dbReference>
<dbReference type="GO" id="GO:0000049">
    <property type="term" value="F:tRNA binding"/>
    <property type="evidence" value="ECO:0007669"/>
    <property type="project" value="UniProtKB-UniRule"/>
</dbReference>
<dbReference type="GO" id="GO:0001682">
    <property type="term" value="P:tRNA 5'-leader removal"/>
    <property type="evidence" value="ECO:0007669"/>
    <property type="project" value="UniProtKB-UniRule"/>
</dbReference>
<dbReference type="FunFam" id="3.30.230.10:FF:000016">
    <property type="entry name" value="Ribonuclease P protein component"/>
    <property type="match status" value="1"/>
</dbReference>
<dbReference type="Gene3D" id="3.30.230.10">
    <property type="match status" value="1"/>
</dbReference>
<dbReference type="HAMAP" id="MF_00227">
    <property type="entry name" value="RNase_P"/>
    <property type="match status" value="1"/>
</dbReference>
<dbReference type="InterPro" id="IPR020568">
    <property type="entry name" value="Ribosomal_Su5_D2-typ_SF"/>
</dbReference>
<dbReference type="InterPro" id="IPR014721">
    <property type="entry name" value="Ribsml_uS5_D2-typ_fold_subgr"/>
</dbReference>
<dbReference type="InterPro" id="IPR000100">
    <property type="entry name" value="RNase_P"/>
</dbReference>
<dbReference type="InterPro" id="IPR020539">
    <property type="entry name" value="RNase_P_CS"/>
</dbReference>
<dbReference type="NCBIfam" id="TIGR00188">
    <property type="entry name" value="rnpA"/>
    <property type="match status" value="1"/>
</dbReference>
<dbReference type="PANTHER" id="PTHR33992">
    <property type="entry name" value="RIBONUCLEASE P PROTEIN COMPONENT"/>
    <property type="match status" value="1"/>
</dbReference>
<dbReference type="PANTHER" id="PTHR33992:SF1">
    <property type="entry name" value="RIBONUCLEASE P PROTEIN COMPONENT"/>
    <property type="match status" value="1"/>
</dbReference>
<dbReference type="Pfam" id="PF00825">
    <property type="entry name" value="Ribonuclease_P"/>
    <property type="match status" value="1"/>
</dbReference>
<dbReference type="SUPFAM" id="SSF54211">
    <property type="entry name" value="Ribosomal protein S5 domain 2-like"/>
    <property type="match status" value="1"/>
</dbReference>
<dbReference type="PROSITE" id="PS00648">
    <property type="entry name" value="RIBONUCLEASE_P"/>
    <property type="match status" value="1"/>
</dbReference>
<name>RNPA_ECO81</name>
<organism>
    <name type="scientific">Escherichia coli O81 (strain ED1a)</name>
    <dbReference type="NCBI Taxonomy" id="585397"/>
    <lineage>
        <taxon>Bacteria</taxon>
        <taxon>Pseudomonadati</taxon>
        <taxon>Pseudomonadota</taxon>
        <taxon>Gammaproteobacteria</taxon>
        <taxon>Enterobacterales</taxon>
        <taxon>Enterobacteriaceae</taxon>
        <taxon>Escherichia</taxon>
    </lineage>
</organism>